<accession>Q87D03</accession>
<comment type="function">
    <text evidence="1">The RuvA-RuvB-RuvC complex processes Holliday junction (HJ) DNA during genetic recombination and DNA repair. Endonuclease that resolves HJ intermediates. Cleaves cruciform DNA by making single-stranded nicks across the HJ at symmetrical positions within the homologous arms, yielding a 5'-phosphate and a 3'-hydroxyl group; requires a central core of homology in the junction. The consensus cleavage sequence is 5'-(A/T)TT(C/G)-3'. Cleavage occurs on the 3'-side of the TT dinucleotide at the point of strand exchange. HJ branch migration catalyzed by RuvA-RuvB allows RuvC to scan DNA until it finds its consensus sequence, where it cleaves and resolves the cruciform DNA.</text>
</comment>
<comment type="catalytic activity">
    <reaction evidence="1">
        <text>Endonucleolytic cleavage at a junction such as a reciprocal single-stranded crossover between two homologous DNA duplexes (Holliday junction).</text>
        <dbReference type="EC" id="3.1.21.10"/>
    </reaction>
</comment>
<comment type="cofactor">
    <cofactor evidence="1">
        <name>Mg(2+)</name>
        <dbReference type="ChEBI" id="CHEBI:18420"/>
    </cofactor>
    <text evidence="1">Binds 2 Mg(2+) ion per subunit.</text>
</comment>
<comment type="subunit">
    <text evidence="1">Homodimer which binds Holliday junction (HJ) DNA. The HJ becomes 2-fold symmetrical on binding to RuvC with unstacked arms; it has a different conformation from HJ DNA in complex with RuvA. In the full resolvosome a probable DNA-RuvA(4)-RuvB(12)-RuvC(2) complex forms which resolves the HJ.</text>
</comment>
<comment type="subcellular location">
    <subcellularLocation>
        <location evidence="1">Cytoplasm</location>
    </subcellularLocation>
</comment>
<comment type="similarity">
    <text evidence="1">Belongs to the RuvC family.</text>
</comment>
<proteinExistence type="inferred from homology"/>
<gene>
    <name evidence="1" type="primary">ruvC</name>
    <name type="ordered locus">PD_0886</name>
</gene>
<sequence>MTRILGIDPGSQRTGVGVIDVDEYGCSHHVYHAPLVLLGQSSFAGRLKQLLLGLSAVIEEYSPKEVAIEKVFMSKNADSALKLGQARGVAISAVVLRDLPVHEYAARQIKLAVVGRGGADKQQIQHMVGVMLNLQGRLQSDAADALAVAITHAHVSATAQRLGVSTKQAWSRK</sequence>
<protein>
    <recommendedName>
        <fullName evidence="1">Crossover junction endodeoxyribonuclease RuvC</fullName>
        <ecNumber evidence="1">3.1.21.10</ecNumber>
    </recommendedName>
    <alternativeName>
        <fullName evidence="1">Holliday junction nuclease RuvC</fullName>
    </alternativeName>
    <alternativeName>
        <fullName evidence="1">Holliday junction resolvase RuvC</fullName>
    </alternativeName>
</protein>
<name>RUVC_XYLFT</name>
<reference key="1">
    <citation type="journal article" date="2003" name="J. Bacteriol.">
        <title>Comparative analyses of the complete genome sequences of Pierce's disease and citrus variegated chlorosis strains of Xylella fastidiosa.</title>
        <authorList>
            <person name="Van Sluys M.A."/>
            <person name="de Oliveira M.C."/>
            <person name="Monteiro-Vitorello C.B."/>
            <person name="Miyaki C.Y."/>
            <person name="Furlan L.R."/>
            <person name="Camargo L.E.A."/>
            <person name="da Silva A.C.R."/>
            <person name="Moon D.H."/>
            <person name="Takita M.A."/>
            <person name="Lemos E.G.M."/>
            <person name="Machado M.A."/>
            <person name="Ferro M.I.T."/>
            <person name="da Silva F.R."/>
            <person name="Goldman M.H.S."/>
            <person name="Goldman G.H."/>
            <person name="Lemos M.V.F."/>
            <person name="El-Dorry H."/>
            <person name="Tsai S.M."/>
            <person name="Carrer H."/>
            <person name="Carraro D.M."/>
            <person name="de Oliveira R.C."/>
            <person name="Nunes L.R."/>
            <person name="Siqueira W.J."/>
            <person name="Coutinho L.L."/>
            <person name="Kimura E.T."/>
            <person name="Ferro E.S."/>
            <person name="Harakava R."/>
            <person name="Kuramae E.E."/>
            <person name="Marino C.L."/>
            <person name="Giglioti E."/>
            <person name="Abreu I.L."/>
            <person name="Alves L.M.C."/>
            <person name="do Amaral A.M."/>
            <person name="Baia G.S."/>
            <person name="Blanco S.R."/>
            <person name="Brito M.S."/>
            <person name="Cannavan F.S."/>
            <person name="Celestino A.V."/>
            <person name="da Cunha A.F."/>
            <person name="Fenille R.C."/>
            <person name="Ferro J.A."/>
            <person name="Formighieri E.F."/>
            <person name="Kishi L.T."/>
            <person name="Leoni S.G."/>
            <person name="Oliveira A.R."/>
            <person name="Rosa V.E. Jr."/>
            <person name="Sassaki F.T."/>
            <person name="Sena J.A.D."/>
            <person name="de Souza A.A."/>
            <person name="Truffi D."/>
            <person name="Tsukumo F."/>
            <person name="Yanai G.M."/>
            <person name="Zaros L.G."/>
            <person name="Civerolo E.L."/>
            <person name="Simpson A.J.G."/>
            <person name="Almeida N.F. Jr."/>
            <person name="Setubal J.C."/>
            <person name="Kitajima J.P."/>
        </authorList>
    </citation>
    <scope>NUCLEOTIDE SEQUENCE [LARGE SCALE GENOMIC DNA]</scope>
    <source>
        <strain>Temecula1 / ATCC 700964</strain>
    </source>
</reference>
<evidence type="ECO:0000255" key="1">
    <source>
        <dbReference type="HAMAP-Rule" id="MF_00034"/>
    </source>
</evidence>
<keyword id="KW-0963">Cytoplasm</keyword>
<keyword id="KW-0227">DNA damage</keyword>
<keyword id="KW-0233">DNA recombination</keyword>
<keyword id="KW-0234">DNA repair</keyword>
<keyword id="KW-0238">DNA-binding</keyword>
<keyword id="KW-0255">Endonuclease</keyword>
<keyword id="KW-0378">Hydrolase</keyword>
<keyword id="KW-0460">Magnesium</keyword>
<keyword id="KW-0479">Metal-binding</keyword>
<keyword id="KW-0540">Nuclease</keyword>
<keyword id="KW-1185">Reference proteome</keyword>
<organism>
    <name type="scientific">Xylella fastidiosa (strain Temecula1 / ATCC 700964)</name>
    <dbReference type="NCBI Taxonomy" id="183190"/>
    <lineage>
        <taxon>Bacteria</taxon>
        <taxon>Pseudomonadati</taxon>
        <taxon>Pseudomonadota</taxon>
        <taxon>Gammaproteobacteria</taxon>
        <taxon>Lysobacterales</taxon>
        <taxon>Lysobacteraceae</taxon>
        <taxon>Xylella</taxon>
    </lineage>
</organism>
<dbReference type="EC" id="3.1.21.10" evidence="1"/>
<dbReference type="EMBL" id="AE009442">
    <property type="protein sequence ID" value="AAO28751.1"/>
    <property type="molecule type" value="Genomic_DNA"/>
</dbReference>
<dbReference type="RefSeq" id="WP_011097831.1">
    <property type="nucleotide sequence ID" value="NC_004556.1"/>
</dbReference>
<dbReference type="SMR" id="Q87D03"/>
<dbReference type="GeneID" id="93904677"/>
<dbReference type="KEGG" id="xft:PD_0886"/>
<dbReference type="HOGENOM" id="CLU_091257_2_1_6"/>
<dbReference type="Proteomes" id="UP000002516">
    <property type="component" value="Chromosome"/>
</dbReference>
<dbReference type="GO" id="GO:0005737">
    <property type="term" value="C:cytoplasm"/>
    <property type="evidence" value="ECO:0007669"/>
    <property type="project" value="UniProtKB-SubCell"/>
</dbReference>
<dbReference type="GO" id="GO:0048476">
    <property type="term" value="C:Holliday junction resolvase complex"/>
    <property type="evidence" value="ECO:0007669"/>
    <property type="project" value="UniProtKB-UniRule"/>
</dbReference>
<dbReference type="GO" id="GO:0008821">
    <property type="term" value="F:crossover junction DNA endonuclease activity"/>
    <property type="evidence" value="ECO:0007669"/>
    <property type="project" value="UniProtKB-UniRule"/>
</dbReference>
<dbReference type="GO" id="GO:0003677">
    <property type="term" value="F:DNA binding"/>
    <property type="evidence" value="ECO:0007669"/>
    <property type="project" value="UniProtKB-KW"/>
</dbReference>
<dbReference type="GO" id="GO:0000287">
    <property type="term" value="F:magnesium ion binding"/>
    <property type="evidence" value="ECO:0007669"/>
    <property type="project" value="UniProtKB-UniRule"/>
</dbReference>
<dbReference type="GO" id="GO:0006310">
    <property type="term" value="P:DNA recombination"/>
    <property type="evidence" value="ECO:0007669"/>
    <property type="project" value="UniProtKB-UniRule"/>
</dbReference>
<dbReference type="GO" id="GO:0006281">
    <property type="term" value="P:DNA repair"/>
    <property type="evidence" value="ECO:0007669"/>
    <property type="project" value="UniProtKB-UniRule"/>
</dbReference>
<dbReference type="CDD" id="cd16962">
    <property type="entry name" value="RuvC"/>
    <property type="match status" value="1"/>
</dbReference>
<dbReference type="FunFam" id="3.30.420.10:FF:000002">
    <property type="entry name" value="Crossover junction endodeoxyribonuclease RuvC"/>
    <property type="match status" value="1"/>
</dbReference>
<dbReference type="Gene3D" id="3.30.420.10">
    <property type="entry name" value="Ribonuclease H-like superfamily/Ribonuclease H"/>
    <property type="match status" value="1"/>
</dbReference>
<dbReference type="HAMAP" id="MF_00034">
    <property type="entry name" value="RuvC"/>
    <property type="match status" value="1"/>
</dbReference>
<dbReference type="InterPro" id="IPR012337">
    <property type="entry name" value="RNaseH-like_sf"/>
</dbReference>
<dbReference type="InterPro" id="IPR036397">
    <property type="entry name" value="RNaseH_sf"/>
</dbReference>
<dbReference type="InterPro" id="IPR020563">
    <property type="entry name" value="X-over_junc_endoDNase_Mg_BS"/>
</dbReference>
<dbReference type="InterPro" id="IPR002176">
    <property type="entry name" value="X-over_junc_endoDNase_RuvC"/>
</dbReference>
<dbReference type="NCBIfam" id="TIGR00228">
    <property type="entry name" value="ruvC"/>
    <property type="match status" value="1"/>
</dbReference>
<dbReference type="PANTHER" id="PTHR30194">
    <property type="entry name" value="CROSSOVER JUNCTION ENDODEOXYRIBONUCLEASE RUVC"/>
    <property type="match status" value="1"/>
</dbReference>
<dbReference type="PANTHER" id="PTHR30194:SF3">
    <property type="entry name" value="CROSSOVER JUNCTION ENDODEOXYRIBONUCLEASE RUVC"/>
    <property type="match status" value="1"/>
</dbReference>
<dbReference type="Pfam" id="PF02075">
    <property type="entry name" value="RuvC"/>
    <property type="match status" value="1"/>
</dbReference>
<dbReference type="PRINTS" id="PR00696">
    <property type="entry name" value="RSOLVASERUVC"/>
</dbReference>
<dbReference type="SUPFAM" id="SSF53098">
    <property type="entry name" value="Ribonuclease H-like"/>
    <property type="match status" value="1"/>
</dbReference>
<dbReference type="PROSITE" id="PS01321">
    <property type="entry name" value="RUVC"/>
    <property type="match status" value="1"/>
</dbReference>
<feature type="chain" id="PRO_0000183153" description="Crossover junction endodeoxyribonuclease RuvC">
    <location>
        <begin position="1"/>
        <end position="173"/>
    </location>
</feature>
<feature type="active site" evidence="1">
    <location>
        <position position="8"/>
    </location>
</feature>
<feature type="active site" evidence="1">
    <location>
        <position position="69"/>
    </location>
</feature>
<feature type="active site" evidence="1">
    <location>
        <position position="141"/>
    </location>
</feature>
<feature type="binding site" evidence="1">
    <location>
        <position position="8"/>
    </location>
    <ligand>
        <name>Mg(2+)</name>
        <dbReference type="ChEBI" id="CHEBI:18420"/>
        <label>1</label>
    </ligand>
</feature>
<feature type="binding site" evidence="1">
    <location>
        <position position="69"/>
    </location>
    <ligand>
        <name>Mg(2+)</name>
        <dbReference type="ChEBI" id="CHEBI:18420"/>
        <label>2</label>
    </ligand>
</feature>
<feature type="binding site" evidence="1">
    <location>
        <position position="141"/>
    </location>
    <ligand>
        <name>Mg(2+)</name>
        <dbReference type="ChEBI" id="CHEBI:18420"/>
        <label>1</label>
    </ligand>
</feature>